<evidence type="ECO:0000255" key="1">
    <source>
        <dbReference type="HAMAP-Rule" id="MF_00523"/>
    </source>
</evidence>
<accession>Q7NJG8</accession>
<name>LPXD1_GLOVI</name>
<proteinExistence type="inferred from homology"/>
<keyword id="KW-0012">Acyltransferase</keyword>
<keyword id="KW-0441">Lipid A biosynthesis</keyword>
<keyword id="KW-0444">Lipid biosynthesis</keyword>
<keyword id="KW-0443">Lipid metabolism</keyword>
<keyword id="KW-1185">Reference proteome</keyword>
<keyword id="KW-0677">Repeat</keyword>
<keyword id="KW-0808">Transferase</keyword>
<organism>
    <name type="scientific">Gloeobacter violaceus (strain ATCC 29082 / PCC 7421)</name>
    <dbReference type="NCBI Taxonomy" id="251221"/>
    <lineage>
        <taxon>Bacteria</taxon>
        <taxon>Bacillati</taxon>
        <taxon>Cyanobacteriota</taxon>
        <taxon>Cyanophyceae</taxon>
        <taxon>Gloeobacterales</taxon>
        <taxon>Gloeobacteraceae</taxon>
        <taxon>Gloeobacter</taxon>
    </lineage>
</organism>
<comment type="function">
    <text evidence="1">Catalyzes the N-acylation of UDP-3-O-acylglucosamine using 3-hydroxyacyl-ACP as the acyl donor. Is involved in the biosynthesis of lipid A, a phosphorylated glycolipid that anchors the lipopolysaccharide to the outer membrane of the cell.</text>
</comment>
<comment type="catalytic activity">
    <reaction evidence="1">
        <text>a UDP-3-O-[(3R)-3-hydroxyacyl]-alpha-D-glucosamine + a (3R)-hydroxyacyl-[ACP] = a UDP-2-N,3-O-bis[(3R)-3-hydroxyacyl]-alpha-D-glucosamine + holo-[ACP] + H(+)</text>
        <dbReference type="Rhea" id="RHEA:53836"/>
        <dbReference type="Rhea" id="RHEA-COMP:9685"/>
        <dbReference type="Rhea" id="RHEA-COMP:9945"/>
        <dbReference type="ChEBI" id="CHEBI:15378"/>
        <dbReference type="ChEBI" id="CHEBI:64479"/>
        <dbReference type="ChEBI" id="CHEBI:78827"/>
        <dbReference type="ChEBI" id="CHEBI:137740"/>
        <dbReference type="ChEBI" id="CHEBI:137748"/>
        <dbReference type="EC" id="2.3.1.191"/>
    </reaction>
</comment>
<comment type="pathway">
    <text evidence="1">Bacterial outer membrane biogenesis; LPS lipid A biosynthesis.</text>
</comment>
<comment type="subunit">
    <text evidence="1">Homotrimer.</text>
</comment>
<comment type="similarity">
    <text evidence="1">Belongs to the transferase hexapeptide repeat family. LpxD subfamily.</text>
</comment>
<reference key="1">
    <citation type="journal article" date="2003" name="DNA Res.">
        <title>Complete genome structure of Gloeobacter violaceus PCC 7421, a cyanobacterium that lacks thylakoids.</title>
        <authorList>
            <person name="Nakamura Y."/>
            <person name="Kaneko T."/>
            <person name="Sato S."/>
            <person name="Mimuro M."/>
            <person name="Miyashita H."/>
            <person name="Tsuchiya T."/>
            <person name="Sasamoto S."/>
            <person name="Watanabe A."/>
            <person name="Kawashima K."/>
            <person name="Kishida Y."/>
            <person name="Kiyokawa C."/>
            <person name="Kohara M."/>
            <person name="Matsumoto M."/>
            <person name="Matsuno A."/>
            <person name="Nakazaki N."/>
            <person name="Shimpo S."/>
            <person name="Takeuchi C."/>
            <person name="Yamada M."/>
            <person name="Tabata S."/>
        </authorList>
    </citation>
    <scope>NUCLEOTIDE SEQUENCE [LARGE SCALE GENOMIC DNA]</scope>
    <source>
        <strain>ATCC 29082 / PCC 7421</strain>
    </source>
</reference>
<protein>
    <recommendedName>
        <fullName evidence="1">UDP-3-O-acylglucosamine N-acyltransferase 1</fullName>
        <ecNumber evidence="1">2.3.1.191</ecNumber>
    </recommendedName>
</protein>
<feature type="chain" id="PRO_0000264378" description="UDP-3-O-acylglucosamine N-acyltransferase 1">
    <location>
        <begin position="1"/>
        <end position="349"/>
    </location>
</feature>
<feature type="active site" description="Proton acceptor" evidence="1">
    <location>
        <position position="241"/>
    </location>
</feature>
<gene>
    <name evidence="1" type="primary">lpxD1</name>
    <name type="ordered locus">glr1864</name>
</gene>
<sequence>MGVQFSAAELTDLVGGELSGDPGRLVVGARPPEEAEGGDLTFALDLHARKLIETTRAGVAITPVRWPFEHLTQIVVANPRLAMAQVLAHMFPQPIAMPPAGIHPSAVVHPSAVVHPSASVAALVYVGPRAAVGANTHLFPGVYVGAEAVVGSECLIYPNVVLMDGIRLGDRVVIHAGSVLGSDGYGFVPTGERHLKVPQVGTVVIGDDVEVGANVAVDRATMGQTEIQAGTKIDNLVHIGHNDRIGRHCLIVSQVGLAGSVKVGDRTVIAGQAGVANQTTVGADCLVLARSGVTKDLPDHSKVSGFPAQDHLLELKQQAARSRLPQIVEQMRQMQRRIEQLEVQLLGRL</sequence>
<dbReference type="EC" id="2.3.1.191" evidence="1"/>
<dbReference type="EMBL" id="BA000045">
    <property type="protein sequence ID" value="BAC89805.1"/>
    <property type="molecule type" value="Genomic_DNA"/>
</dbReference>
<dbReference type="RefSeq" id="NP_924810.1">
    <property type="nucleotide sequence ID" value="NC_005125.1"/>
</dbReference>
<dbReference type="RefSeq" id="WP_011141862.1">
    <property type="nucleotide sequence ID" value="NC_005125.1"/>
</dbReference>
<dbReference type="SMR" id="Q7NJG8"/>
<dbReference type="STRING" id="251221.gene:10759356"/>
<dbReference type="EnsemblBacteria" id="BAC89805">
    <property type="protein sequence ID" value="BAC89805"/>
    <property type="gene ID" value="BAC89805"/>
</dbReference>
<dbReference type="KEGG" id="gvi:glr1864"/>
<dbReference type="PATRIC" id="fig|251221.4.peg.1897"/>
<dbReference type="eggNOG" id="COG1044">
    <property type="taxonomic scope" value="Bacteria"/>
</dbReference>
<dbReference type="HOGENOM" id="CLU_049865_0_0_3"/>
<dbReference type="InParanoid" id="Q7NJG8"/>
<dbReference type="OrthoDB" id="9784739at2"/>
<dbReference type="PhylomeDB" id="Q7NJG8"/>
<dbReference type="UniPathway" id="UPA00973"/>
<dbReference type="Proteomes" id="UP000000557">
    <property type="component" value="Chromosome"/>
</dbReference>
<dbReference type="GO" id="GO:0031470">
    <property type="term" value="C:carboxysome"/>
    <property type="evidence" value="ECO:0007669"/>
    <property type="project" value="UniProtKB-ARBA"/>
</dbReference>
<dbReference type="GO" id="GO:0016020">
    <property type="term" value="C:membrane"/>
    <property type="evidence" value="ECO:0007669"/>
    <property type="project" value="GOC"/>
</dbReference>
<dbReference type="GO" id="GO:0016410">
    <property type="term" value="F:N-acyltransferase activity"/>
    <property type="evidence" value="ECO:0007669"/>
    <property type="project" value="InterPro"/>
</dbReference>
<dbReference type="GO" id="GO:0043886">
    <property type="term" value="F:structural constituent of carboxysome shell"/>
    <property type="evidence" value="ECO:0007669"/>
    <property type="project" value="UniProtKB-ARBA"/>
</dbReference>
<dbReference type="GO" id="GO:0009245">
    <property type="term" value="P:lipid A biosynthetic process"/>
    <property type="evidence" value="ECO:0007669"/>
    <property type="project" value="UniProtKB-UniRule"/>
</dbReference>
<dbReference type="CDD" id="cd03352">
    <property type="entry name" value="LbH_LpxD"/>
    <property type="match status" value="1"/>
</dbReference>
<dbReference type="Gene3D" id="2.160.10.10">
    <property type="entry name" value="Hexapeptide repeat proteins"/>
    <property type="match status" value="1"/>
</dbReference>
<dbReference type="Gene3D" id="3.40.1390.10">
    <property type="entry name" value="MurE/MurF, N-terminal domain"/>
    <property type="match status" value="1"/>
</dbReference>
<dbReference type="HAMAP" id="MF_00523">
    <property type="entry name" value="LpxD"/>
    <property type="match status" value="1"/>
</dbReference>
<dbReference type="InterPro" id="IPR001451">
    <property type="entry name" value="Hexapep"/>
</dbReference>
<dbReference type="InterPro" id="IPR007691">
    <property type="entry name" value="LpxD"/>
</dbReference>
<dbReference type="InterPro" id="IPR011004">
    <property type="entry name" value="Trimer_LpxA-like_sf"/>
</dbReference>
<dbReference type="InterPro" id="IPR020573">
    <property type="entry name" value="UDP_GlcNAc_AcTrfase_non-rep"/>
</dbReference>
<dbReference type="NCBIfam" id="TIGR01853">
    <property type="entry name" value="lipid_A_lpxD"/>
    <property type="match status" value="1"/>
</dbReference>
<dbReference type="NCBIfam" id="NF002060">
    <property type="entry name" value="PRK00892.1"/>
    <property type="match status" value="1"/>
</dbReference>
<dbReference type="PANTHER" id="PTHR43378">
    <property type="entry name" value="UDP-3-O-ACYLGLUCOSAMINE N-ACYLTRANSFERASE"/>
    <property type="match status" value="1"/>
</dbReference>
<dbReference type="PANTHER" id="PTHR43378:SF2">
    <property type="entry name" value="UDP-3-O-ACYLGLUCOSAMINE N-ACYLTRANSFERASE 1, MITOCHONDRIAL-RELATED"/>
    <property type="match status" value="1"/>
</dbReference>
<dbReference type="Pfam" id="PF00132">
    <property type="entry name" value="Hexapep"/>
    <property type="match status" value="1"/>
</dbReference>
<dbReference type="Pfam" id="PF04613">
    <property type="entry name" value="LpxD"/>
    <property type="match status" value="1"/>
</dbReference>
<dbReference type="SUPFAM" id="SSF51161">
    <property type="entry name" value="Trimeric LpxA-like enzymes"/>
    <property type="match status" value="1"/>
</dbReference>